<proteinExistence type="evidence at protein level"/>
<gene>
    <name evidence="8" type="ORF">AUL39_03420</name>
</gene>
<dbReference type="EC" id="4.1.1.115" evidence="4"/>
<dbReference type="EMBL" id="LOJF01000001">
    <property type="protein sequence ID" value="KUH59380.1"/>
    <property type="molecule type" value="Genomic_DNA"/>
</dbReference>
<dbReference type="SMR" id="A0A100YXA1"/>
<dbReference type="STRING" id="1299998.AUL39_03420"/>
<dbReference type="OrthoDB" id="9803969at2"/>
<dbReference type="BRENDA" id="4.1.1.115">
    <property type="organism ID" value="16827"/>
</dbReference>
<dbReference type="Proteomes" id="UP000054078">
    <property type="component" value="Unassembled WGS sequence"/>
</dbReference>
<dbReference type="GO" id="GO:0005829">
    <property type="term" value="C:cytosol"/>
    <property type="evidence" value="ECO:0007669"/>
    <property type="project" value="TreeGrafter"/>
</dbReference>
<dbReference type="GO" id="GO:0016829">
    <property type="term" value="F:lyase activity"/>
    <property type="evidence" value="ECO:0007669"/>
    <property type="project" value="UniProtKB-KW"/>
</dbReference>
<dbReference type="GO" id="GO:0016740">
    <property type="term" value="F:transferase activity"/>
    <property type="evidence" value="ECO:0007669"/>
    <property type="project" value="UniProtKB-KW"/>
</dbReference>
<dbReference type="Gene3D" id="3.20.70.20">
    <property type="match status" value="1"/>
</dbReference>
<dbReference type="InterPro" id="IPR001150">
    <property type="entry name" value="Gly_radical"/>
</dbReference>
<dbReference type="InterPro" id="IPR051215">
    <property type="entry name" value="GRE"/>
</dbReference>
<dbReference type="InterPro" id="IPR053798">
    <property type="entry name" value="IAD-like"/>
</dbReference>
<dbReference type="InterPro" id="IPR004184">
    <property type="entry name" value="PFL_dom"/>
</dbReference>
<dbReference type="NCBIfam" id="NF033718">
    <property type="entry name" value="indole_decarb"/>
    <property type="match status" value="1"/>
</dbReference>
<dbReference type="PANTHER" id="PTHR43641:SF2">
    <property type="entry name" value="DEHYDRATASE YBIW-RELATED"/>
    <property type="match status" value="1"/>
</dbReference>
<dbReference type="PANTHER" id="PTHR43641">
    <property type="entry name" value="FORMATE ACETYLTRANSFERASE 3-RELATED"/>
    <property type="match status" value="1"/>
</dbReference>
<dbReference type="Pfam" id="PF01228">
    <property type="entry name" value="Gly_radical"/>
    <property type="match status" value="1"/>
</dbReference>
<dbReference type="Pfam" id="PF02901">
    <property type="entry name" value="PFL-like"/>
    <property type="match status" value="1"/>
</dbReference>
<dbReference type="SUPFAM" id="SSF51998">
    <property type="entry name" value="PFL-like glycyl radical enzymes"/>
    <property type="match status" value="1"/>
</dbReference>
<dbReference type="PROSITE" id="PS51149">
    <property type="entry name" value="GLY_RADICAL_2"/>
    <property type="match status" value="1"/>
</dbReference>
<dbReference type="PROSITE" id="PS51554">
    <property type="entry name" value="PFL"/>
    <property type="match status" value="1"/>
</dbReference>
<feature type="chain" id="PRO_0000458995" description="Indoleacetate decarboxylase">
    <location>
        <begin position="1"/>
        <end position="878"/>
    </location>
</feature>
<feature type="domain" description="PFL" evidence="3">
    <location>
        <begin position="42"/>
        <end position="750"/>
    </location>
</feature>
<feature type="domain" description="Glycine radical" evidence="2">
    <location>
        <begin position="758"/>
        <end position="878"/>
    </location>
</feature>
<feature type="active site" description="Cysteine radical intermediate" evidence="1">
    <location>
        <position position="500"/>
    </location>
</feature>
<feature type="active site" description="Proton acceptor" evidence="1">
    <location>
        <position position="502"/>
    </location>
</feature>
<feature type="modified residue" description="Glycine radical" evidence="2">
    <location>
        <position position="853"/>
    </location>
</feature>
<comment type="function">
    <text evidence="4">Glycyl radical enzyme that catalyzes the terminal step of tryptophan fermentation, the decarboxylation of indoleacetate to form skatole, a malodorous compound that contributes to the characteristic smell of animal feces (PubMed:30310076). No activity is detected with phenylacetate or p-hydroxyphenylacetate as substrates, indicating high substrate specificity (PubMed:30310076).</text>
</comment>
<comment type="catalytic activity">
    <reaction evidence="4">
        <text>(indol-3-yl)acetate + H(+) = skatole + CO2</text>
        <dbReference type="Rhea" id="RHEA:59216"/>
        <dbReference type="ChEBI" id="CHEBI:9171"/>
        <dbReference type="ChEBI" id="CHEBI:15378"/>
        <dbReference type="ChEBI" id="CHEBI:16526"/>
        <dbReference type="ChEBI" id="CHEBI:30854"/>
        <dbReference type="EC" id="4.1.1.115"/>
    </reaction>
    <physiologicalReaction direction="left-to-right" evidence="4">
        <dbReference type="Rhea" id="RHEA:59217"/>
    </physiologicalReaction>
</comment>
<comment type="biophysicochemical properties">
    <kinetics>
        <KM evidence="4">0.37 mM for (indol-3-yl)acetate</KM>
        <text evidence="4">kcat is 2.0 sec(-1).</text>
    </kinetics>
</comment>
<comment type="pathway">
    <text evidence="7">Amino-acid degradation.</text>
</comment>
<comment type="subunit">
    <text evidence="4">Homodimer (predominantly) and monomer.</text>
</comment>
<comment type="PTM">
    <text evidence="4">Requires the activating protein OsIADAE to generate the key active site glycyl radical on Gly-853 that is involved in catalysis.</text>
</comment>
<comment type="similarity">
    <text evidence="6">Belongs to the glycyl radical enzyme (GRE) family.</text>
</comment>
<evidence type="ECO:0000250" key="1">
    <source>
        <dbReference type="UniProtKB" id="Q30W70"/>
    </source>
</evidence>
<evidence type="ECO:0000255" key="2">
    <source>
        <dbReference type="PROSITE-ProRule" id="PRU00493"/>
    </source>
</evidence>
<evidence type="ECO:0000255" key="3">
    <source>
        <dbReference type="PROSITE-ProRule" id="PRU00887"/>
    </source>
</evidence>
<evidence type="ECO:0000269" key="4">
    <source>
    </source>
</evidence>
<evidence type="ECO:0000303" key="5">
    <source>
    </source>
</evidence>
<evidence type="ECO:0000305" key="6"/>
<evidence type="ECO:0000305" key="7">
    <source>
    </source>
</evidence>
<evidence type="ECO:0000312" key="8">
    <source>
        <dbReference type="EMBL" id="KUH59380.1"/>
    </source>
</evidence>
<organism>
    <name type="scientific">Tractidigestivibacter scatoligenes</name>
    <name type="common">Olsenella scatoligenes</name>
    <dbReference type="NCBI Taxonomy" id="1299998"/>
    <lineage>
        <taxon>Bacteria</taxon>
        <taxon>Bacillati</taxon>
        <taxon>Actinomycetota</taxon>
        <taxon>Coriobacteriia</taxon>
        <taxon>Coriobacteriales</taxon>
        <taxon>Atopobiaceae</taxon>
        <taxon>Tractidigestivibacter</taxon>
    </lineage>
</organism>
<reference key="1">
    <citation type="journal article" date="2016" name="Genome Announc.">
        <title>Draft genome sequence of Olsenella scatoligenes SK9K4, a producer of 3-methylindole (skatole) and 4-methylphenol (p-cresol), isolated from pig feces.</title>
        <authorList>
            <person name="Li X."/>
            <person name="Hojberg O."/>
            <person name="Noel S.J."/>
            <person name="Canibe N."/>
            <person name="Jensen B.B."/>
        </authorList>
    </citation>
    <scope>NUCLEOTIDE SEQUENCE [LARGE SCALE GENOMIC DNA]</scope>
    <source>
        <strain>DSM 28304 / JCM 19907 / KCTC 15503 / SK9K4</strain>
    </source>
</reference>
<reference key="2">
    <citation type="journal article" date="2018" name="Nat. Commun.">
        <title>Indoleacetate decarboxylase is a glycyl radical enzyme catalysing the formation of malodorant skatole.</title>
        <authorList>
            <person name="Liu D."/>
            <person name="Wei Y."/>
            <person name="Liu X."/>
            <person name="Zhou Y."/>
            <person name="Jiang L."/>
            <person name="Yin J."/>
            <person name="Wang F."/>
            <person name="Hu Y."/>
            <person name="Nanjaraj Urs A.N."/>
            <person name="Liu Y."/>
            <person name="Ang E.L."/>
            <person name="Zhao S."/>
            <person name="Zhao H."/>
            <person name="Zhang Y."/>
        </authorList>
    </citation>
    <scope>FUNCTION</scope>
    <scope>CATALYTIC ACTIVITY</scope>
    <scope>BIOPHYSICOCHEMICAL PROPERTIES</scope>
    <scope>SUBUNIT</scope>
    <scope>ACTIVATION BY THE ACTIVATING ENZYME OSIADAE</scope>
</reference>
<protein>
    <recommendedName>
        <fullName evidence="5">Indoleacetate decarboxylase</fullName>
        <shortName evidence="5">IAD</shortName>
        <ecNumber evidence="4">4.1.1.115</ecNumber>
    </recommendedName>
    <alternativeName>
        <fullName evidence="5">OsIAD</fullName>
    </alternativeName>
</protein>
<accession>A0A100YXA1</accession>
<name>IAD_TRASO</name>
<keyword id="KW-0456">Lyase</keyword>
<keyword id="KW-0556">Organic radical</keyword>
<keyword id="KW-1185">Reference proteome</keyword>
<keyword id="KW-0677">Repeat</keyword>
<keyword id="KW-0808">Transferase</keyword>
<sequence>MQESLVLEMLQTGKTATWPANSGTQDGEGFVDKEVKGVPSTDRTKRMKERFMNAKCKMDMEAPIAYTKAWRMYEGKPLYVRRGLSYKYMLEHLTPVIRPDELITMSKTRYDRGATQVPQFATDFMISFLTQAEDQKDEAKLFSVEGKDEAHTVDEEGWTPVGQLFSIREEEVKPMLEVLEYWKTRCVENVSDEWMKTSFPMYQDYINAKKVGLFPGSGLHAGCDGRWIPAYDVVLGGLNKVIDECKKNIAKTVVTTKDVADKVFFWQGCIYACEGAIAWANNYAKEARRLAEITPEPRKTELLQMAERLERVPAEPPRNFMEAVQALWTAQILIISDSLALGVSPGRWGKLLEPYYEKDLADGVITKEQALEVMEMLRIKFSTEEYITPSLWAAMASSNSFMNLAVGGLDPKTGQCTDNELEDLILQAGINMPTPQPTLSMLLSNKTSDHLALKAAECTKAGNGYPAWFNYDMMVEHNLWCYADEGITMEDARNCALSGCVENGLAGTGHPIAHPAFYNEGKTIELALHEGVDPRTGIKVMDGIKPVESYEDVWNNFVKIREHFMRVYMRYWNEVVACQRDIHPKIMGSIFMHDCVENGRPVDNLGCRYNGSVTLLDSGTVNVVNGLAAMKKLIWEDHKYTYAEFKEAMDNNFGFVLGAEKGNFSMLNQEIDPEKHMKYAQIHRDILNCPKFGNDDDFVDDIFVKVWQDYDRVTGSETTYNGYRWITAALSISAHGPHGRVTGATPDGRLAGVTLCDGILSASPGTDVNGPIALIRSGVKLDPTTFASVQLNMKFHPSAIRGEEGSKNFVDFIRSYFNMGGYHVQFNIVDSKMLRDAQDKPQNYRDLMVRVAGFSAYWNELGKPIQDEVIARTEYDAL</sequence>